<protein>
    <recommendedName>
        <fullName>Cytochrome c-type protein NapC</fullName>
    </recommendedName>
</protein>
<gene>
    <name type="primary">napC</name>
    <name type="synonym">yejX</name>
    <name type="ordered locus">b2202</name>
    <name type="ordered locus">JW2190</name>
</gene>
<evidence type="ECO:0000250" key="1">
    <source>
        <dbReference type="UniProtKB" id="Q72EF4"/>
    </source>
</evidence>
<evidence type="ECO:0000255" key="2"/>
<evidence type="ECO:0000305" key="3"/>
<name>NAPC_ECOLI</name>
<accession>P0ABL5</accession>
<accession>P33932</accession>
<accession>Q2MAP1</accession>
<keyword id="KW-0997">Cell inner membrane</keyword>
<keyword id="KW-1003">Cell membrane</keyword>
<keyword id="KW-0249">Electron transport</keyword>
<keyword id="KW-0349">Heme</keyword>
<keyword id="KW-0408">Iron</keyword>
<keyword id="KW-0472">Membrane</keyword>
<keyword id="KW-0479">Metal-binding</keyword>
<keyword id="KW-1185">Reference proteome</keyword>
<keyword id="KW-0812">Transmembrane</keyword>
<keyword id="KW-1133">Transmembrane helix</keyword>
<keyword id="KW-0813">Transport</keyword>
<organism>
    <name type="scientific">Escherichia coli (strain K12)</name>
    <dbReference type="NCBI Taxonomy" id="83333"/>
    <lineage>
        <taxon>Bacteria</taxon>
        <taxon>Pseudomonadati</taxon>
        <taxon>Pseudomonadota</taxon>
        <taxon>Gammaproteobacteria</taxon>
        <taxon>Enterobacterales</taxon>
        <taxon>Enterobacteriaceae</taxon>
        <taxon>Escherichia</taxon>
    </lineage>
</organism>
<reference key="1">
    <citation type="submission" date="1993-10" db="EMBL/GenBank/DDBJ databases">
        <title>Automated multiplex sequencing of the E.coli genome.</title>
        <authorList>
            <person name="Richterich P."/>
            <person name="Lakey N."/>
            <person name="Gryan G."/>
            <person name="Jaehn L."/>
            <person name="Mintz L."/>
            <person name="Robison K."/>
            <person name="Church G.M."/>
        </authorList>
    </citation>
    <scope>NUCLEOTIDE SEQUENCE [LARGE SCALE GENOMIC DNA]</scope>
    <source>
        <strain>K12 / BHB2600</strain>
    </source>
</reference>
<reference key="2">
    <citation type="journal article" date="1997" name="Science">
        <title>The complete genome sequence of Escherichia coli K-12.</title>
        <authorList>
            <person name="Blattner F.R."/>
            <person name="Plunkett G. III"/>
            <person name="Bloch C.A."/>
            <person name="Perna N.T."/>
            <person name="Burland V."/>
            <person name="Riley M."/>
            <person name="Collado-Vides J."/>
            <person name="Glasner J.D."/>
            <person name="Rode C.K."/>
            <person name="Mayhew G.F."/>
            <person name="Gregor J."/>
            <person name="Davis N.W."/>
            <person name="Kirkpatrick H.A."/>
            <person name="Goeden M.A."/>
            <person name="Rose D.J."/>
            <person name="Mau B."/>
            <person name="Shao Y."/>
        </authorList>
    </citation>
    <scope>NUCLEOTIDE SEQUENCE [LARGE SCALE GENOMIC DNA]</scope>
    <source>
        <strain>K12 / MG1655 / ATCC 47076</strain>
    </source>
</reference>
<reference key="3">
    <citation type="journal article" date="2006" name="Mol. Syst. Biol.">
        <title>Highly accurate genome sequences of Escherichia coli K-12 strains MG1655 and W3110.</title>
        <authorList>
            <person name="Hayashi K."/>
            <person name="Morooka N."/>
            <person name="Yamamoto Y."/>
            <person name="Fujita K."/>
            <person name="Isono K."/>
            <person name="Choi S."/>
            <person name="Ohtsubo E."/>
            <person name="Baba T."/>
            <person name="Wanner B.L."/>
            <person name="Mori H."/>
            <person name="Horiuchi T."/>
        </authorList>
    </citation>
    <scope>NUCLEOTIDE SEQUENCE [LARGE SCALE GENOMIC DNA]</scope>
    <source>
        <strain>K12 / W3110 / ATCC 27325 / DSM 5911</strain>
    </source>
</reference>
<reference key="4">
    <citation type="journal article" date="1994" name="FEMS Microbiol. Lett.">
        <title>A reassessment of the range of c-type cytochromes synthesized by Escherichia coli K-12.</title>
        <authorList>
            <person name="Iobbi-Nivol C."/>
            <person name="Crooke H."/>
            <person name="Griffiths L."/>
            <person name="Grov J."/>
            <person name="Hussain H."/>
            <person name="Pommier J."/>
            <person name="Mejean V."/>
            <person name="Cole J.A."/>
        </authorList>
    </citation>
    <scope>CHARACTERIZATION AS A CYTOCHROME C</scope>
</reference>
<sequence>MGNSDRKPGLIKRLWKWWRTPSRLALGTLLLIGFVGGIVFWGGFNTGMEKANTEEFCISCHEMRNTVYQEYMDSVHYNNRSGVRATCPDCHVPHEFVPKMIRKLKASKELYGKIFGVIDTPQKFEAHRLTMAQNEWRRMKDNNSQECRNCHNFEYMDTTAQKSVAAKMHDQAVKDGQTCIDCHKGIAHKLPDMREVEPGF</sequence>
<comment type="function">
    <text>Mediates electron flow from quinones to the NapAB complex.</text>
</comment>
<comment type="subcellular location">
    <subcellularLocation>
        <location>Cell inner membrane</location>
        <topology>Single-pass membrane protein</topology>
    </subcellularLocation>
</comment>
<comment type="PTM">
    <text evidence="3">Binds 4 heme groups per subunit.</text>
</comment>
<comment type="similarity">
    <text evidence="3">Belongs to the NapC/NirT/NrfH family.</text>
</comment>
<dbReference type="EMBL" id="U00008">
    <property type="protein sequence ID" value="AAA16394.1"/>
    <property type="molecule type" value="Genomic_DNA"/>
</dbReference>
<dbReference type="EMBL" id="U00096">
    <property type="protein sequence ID" value="AAC75262.1"/>
    <property type="molecule type" value="Genomic_DNA"/>
</dbReference>
<dbReference type="EMBL" id="AP009048">
    <property type="protein sequence ID" value="BAE76665.1"/>
    <property type="molecule type" value="Genomic_DNA"/>
</dbReference>
<dbReference type="PIR" id="H64989">
    <property type="entry name" value="H64989"/>
</dbReference>
<dbReference type="RefSeq" id="NP_416706.1">
    <property type="nucleotide sequence ID" value="NC_000913.3"/>
</dbReference>
<dbReference type="RefSeq" id="WP_000528376.1">
    <property type="nucleotide sequence ID" value="NZ_SSZK01000027.1"/>
</dbReference>
<dbReference type="BioGRID" id="4261930">
    <property type="interactions" value="55"/>
</dbReference>
<dbReference type="DIP" id="DIP-10306N"/>
<dbReference type="FunCoup" id="P0ABL5">
    <property type="interactions" value="236"/>
</dbReference>
<dbReference type="IntAct" id="P0ABL5">
    <property type="interactions" value="43"/>
</dbReference>
<dbReference type="STRING" id="511145.b2202"/>
<dbReference type="TCDB" id="3.D.11.1.1">
    <property type="family name" value="the periplasmic nitrate reductase complex (nap) complex family"/>
</dbReference>
<dbReference type="jPOST" id="P0ABL5"/>
<dbReference type="PaxDb" id="511145-b2202"/>
<dbReference type="EnsemblBacteria" id="AAC75262">
    <property type="protein sequence ID" value="AAC75262"/>
    <property type="gene ID" value="b2202"/>
</dbReference>
<dbReference type="GeneID" id="93774976"/>
<dbReference type="GeneID" id="946706"/>
<dbReference type="KEGG" id="ecj:JW2190"/>
<dbReference type="KEGG" id="eco:b2202"/>
<dbReference type="KEGG" id="ecoc:C3026_12305"/>
<dbReference type="PATRIC" id="fig|1411691.4.peg.34"/>
<dbReference type="EchoBASE" id="EB1990"/>
<dbReference type="eggNOG" id="COG3005">
    <property type="taxonomic scope" value="Bacteria"/>
</dbReference>
<dbReference type="HOGENOM" id="CLU_096753_2_0_6"/>
<dbReference type="InParanoid" id="P0ABL5"/>
<dbReference type="OMA" id="MDFTAQK"/>
<dbReference type="OrthoDB" id="9782159at2"/>
<dbReference type="PhylomeDB" id="P0ABL5"/>
<dbReference type="BioCyc" id="EcoCyc:NAPC-MONOMER"/>
<dbReference type="PHI-base" id="PHI:10526"/>
<dbReference type="PRO" id="PR:P0ABL5"/>
<dbReference type="Proteomes" id="UP000000625">
    <property type="component" value="Chromosome"/>
</dbReference>
<dbReference type="GO" id="GO:0005886">
    <property type="term" value="C:plasma membrane"/>
    <property type="evidence" value="ECO:0007669"/>
    <property type="project" value="UniProtKB-SubCell"/>
</dbReference>
<dbReference type="GO" id="GO:0009055">
    <property type="term" value="F:electron transfer activity"/>
    <property type="evidence" value="ECO:0000318"/>
    <property type="project" value="GO_Central"/>
</dbReference>
<dbReference type="GO" id="GO:0020037">
    <property type="term" value="F:heme binding"/>
    <property type="evidence" value="ECO:0007669"/>
    <property type="project" value="InterPro"/>
</dbReference>
<dbReference type="GO" id="GO:0046872">
    <property type="term" value="F:metal ion binding"/>
    <property type="evidence" value="ECO:0007669"/>
    <property type="project" value="UniProtKB-KW"/>
</dbReference>
<dbReference type="GO" id="GO:0009061">
    <property type="term" value="P:anaerobic respiration"/>
    <property type="evidence" value="ECO:0000315"/>
    <property type="project" value="EcoCyc"/>
</dbReference>
<dbReference type="GO" id="GO:0019333">
    <property type="term" value="P:denitrification pathway"/>
    <property type="evidence" value="ECO:0007669"/>
    <property type="project" value="InterPro"/>
</dbReference>
<dbReference type="FunFam" id="1.10.3820.10:FF:000001">
    <property type="entry name" value="Cytochrome c-type protein"/>
    <property type="match status" value="1"/>
</dbReference>
<dbReference type="Gene3D" id="1.10.3820.10">
    <property type="entry name" value="Di-heme elbow motif domain"/>
    <property type="match status" value="1"/>
</dbReference>
<dbReference type="InterPro" id="IPR051174">
    <property type="entry name" value="Cytochrome_c-type_ET"/>
</dbReference>
<dbReference type="InterPro" id="IPR036280">
    <property type="entry name" value="Multihaem_cyt_sf"/>
</dbReference>
<dbReference type="InterPro" id="IPR024717">
    <property type="entry name" value="NapC/NirT/NrfH"/>
</dbReference>
<dbReference type="InterPro" id="IPR005126">
    <property type="entry name" value="NapC/NirT_cyt_c_N"/>
</dbReference>
<dbReference type="InterPro" id="IPR038266">
    <property type="entry name" value="NapC/NirT_cytc_sf"/>
</dbReference>
<dbReference type="InterPro" id="IPR011885">
    <property type="entry name" value="NO3Rdtase_cyt_c_NapC/NirT"/>
</dbReference>
<dbReference type="NCBIfam" id="TIGR02161">
    <property type="entry name" value="napC_nirT"/>
    <property type="match status" value="1"/>
</dbReference>
<dbReference type="NCBIfam" id="NF007906">
    <property type="entry name" value="PRK10617.1"/>
    <property type="match status" value="1"/>
</dbReference>
<dbReference type="PANTHER" id="PTHR30333">
    <property type="entry name" value="CYTOCHROME C-TYPE PROTEIN"/>
    <property type="match status" value="1"/>
</dbReference>
<dbReference type="PANTHER" id="PTHR30333:SF1">
    <property type="entry name" value="CYTOCHROME C-TYPE PROTEIN NAPC"/>
    <property type="match status" value="1"/>
</dbReference>
<dbReference type="Pfam" id="PF03264">
    <property type="entry name" value="Cytochrom_NNT"/>
    <property type="match status" value="1"/>
</dbReference>
<dbReference type="PIRSF" id="PIRSF000013">
    <property type="entry name" value="4_hem_cytochrm_NapC"/>
    <property type="match status" value="1"/>
</dbReference>
<dbReference type="SUPFAM" id="SSF48695">
    <property type="entry name" value="Multiheme cytochromes"/>
    <property type="match status" value="1"/>
</dbReference>
<dbReference type="PROSITE" id="PS51008">
    <property type="entry name" value="MULTIHEME_CYTC"/>
    <property type="match status" value="1"/>
</dbReference>
<feature type="chain" id="PRO_0000108432" description="Cytochrome c-type protein NapC">
    <location>
        <begin position="1"/>
        <end position="200"/>
    </location>
</feature>
<feature type="topological domain" description="Cytoplasmic" evidence="2">
    <location>
        <begin position="1"/>
        <end position="23"/>
    </location>
</feature>
<feature type="transmembrane region" description="Helical" evidence="2">
    <location>
        <begin position="24"/>
        <end position="44"/>
    </location>
</feature>
<feature type="topological domain" description="Periplasmic" evidence="2">
    <location>
        <begin position="45"/>
        <end position="200"/>
    </location>
</feature>
<feature type="binding site" description="covalent" evidence="1">
    <location>
        <position position="57"/>
    </location>
    <ligand>
        <name>heme</name>
        <dbReference type="ChEBI" id="CHEBI:30413"/>
        <label>1</label>
    </ligand>
</feature>
<feature type="binding site" description="covalent" evidence="1">
    <location>
        <position position="60"/>
    </location>
    <ligand>
        <name>heme</name>
        <dbReference type="ChEBI" id="CHEBI:30413"/>
        <label>1</label>
    </ligand>
</feature>
<feature type="binding site" description="axial binding residue" evidence="1">
    <location>
        <position position="63"/>
    </location>
    <ligand>
        <name>heme</name>
        <dbReference type="ChEBI" id="CHEBI:30413"/>
        <label>1</label>
    </ligand>
    <ligandPart>
        <name>Fe</name>
        <dbReference type="ChEBI" id="CHEBI:18248"/>
    </ligandPart>
</feature>
<feature type="binding site" description="covalent" evidence="1">
    <location>
        <position position="87"/>
    </location>
    <ligand>
        <name>heme</name>
        <dbReference type="ChEBI" id="CHEBI:30413"/>
        <label>2</label>
    </ligand>
</feature>
<feature type="binding site" description="covalent" evidence="1">
    <location>
        <position position="90"/>
    </location>
    <ligand>
        <name>heme</name>
        <dbReference type="ChEBI" id="CHEBI:30413"/>
        <label>2</label>
    </ligand>
</feature>
<feature type="binding site" description="axial binding residue" evidence="1">
    <location>
        <position position="91"/>
    </location>
    <ligand>
        <name>heme</name>
        <dbReference type="ChEBI" id="CHEBI:30413"/>
        <label>2</label>
    </ligand>
    <ligandPart>
        <name>Fe</name>
        <dbReference type="ChEBI" id="CHEBI:18248"/>
    </ligandPart>
</feature>
<feature type="binding site" evidence="1">
    <location>
        <position position="103"/>
    </location>
    <ligand>
        <name>substrate</name>
    </ligand>
</feature>
<feature type="binding site" description="axial binding residue" evidence="1">
    <location>
        <position position="109"/>
    </location>
    <ligand>
        <name>heme</name>
        <dbReference type="ChEBI" id="CHEBI:30413"/>
        <label>1</label>
    </ligand>
    <ligandPart>
        <name>Fe</name>
        <dbReference type="ChEBI" id="CHEBI:18248"/>
    </ligandPart>
</feature>
<feature type="binding site" description="covalent" evidence="1">
    <location>
        <position position="147"/>
    </location>
    <ligand>
        <name>heme</name>
        <dbReference type="ChEBI" id="CHEBI:30413"/>
        <label>3</label>
    </ligand>
</feature>
<feature type="binding site" description="covalent" evidence="1">
    <location>
        <position position="150"/>
    </location>
    <ligand>
        <name>heme</name>
        <dbReference type="ChEBI" id="CHEBI:30413"/>
        <label>3</label>
    </ligand>
</feature>
<feature type="binding site" description="axial binding residue" evidence="1">
    <location>
        <position position="151"/>
    </location>
    <ligand>
        <name>heme</name>
        <dbReference type="ChEBI" id="CHEBI:30413"/>
        <label>3</label>
    </ligand>
    <ligandPart>
        <name>Fe</name>
        <dbReference type="ChEBI" id="CHEBI:18248"/>
    </ligandPart>
</feature>
<feature type="binding site" description="covalent" evidence="1">
    <location>
        <position position="179"/>
    </location>
    <ligand>
        <name>heme</name>
        <dbReference type="ChEBI" id="CHEBI:30413"/>
        <label>4</label>
    </ligand>
</feature>
<feature type="binding site" description="covalent" evidence="1">
    <location>
        <position position="182"/>
    </location>
    <ligand>
        <name>heme</name>
        <dbReference type="ChEBI" id="CHEBI:30413"/>
        <label>4</label>
    </ligand>
</feature>
<feature type="binding site" description="axial binding residue" evidence="1">
    <location>
        <position position="183"/>
    </location>
    <ligand>
        <name>heme</name>
        <dbReference type="ChEBI" id="CHEBI:30413"/>
        <label>4</label>
    </ligand>
    <ligandPart>
        <name>Fe</name>
        <dbReference type="ChEBI" id="CHEBI:18248"/>
    </ligandPart>
</feature>
<feature type="binding site" description="axial binding residue" evidence="1">
    <location>
        <position position="188"/>
    </location>
    <ligand>
        <name>heme</name>
        <dbReference type="ChEBI" id="CHEBI:30413"/>
        <label>2</label>
    </ligand>
    <ligandPart>
        <name>Fe</name>
        <dbReference type="ChEBI" id="CHEBI:18248"/>
    </ligandPart>
</feature>
<proteinExistence type="evidence at protein level"/>